<evidence type="ECO:0000255" key="1">
    <source>
        <dbReference type="HAMAP-Rule" id="MF_01602"/>
    </source>
</evidence>
<evidence type="ECO:0000255" key="2">
    <source>
        <dbReference type="PROSITE-ProRule" id="PRU01067"/>
    </source>
</evidence>
<gene>
    <name evidence="1" type="primary">lplA</name>
    <name type="ordered locus">SSON_4536</name>
</gene>
<feature type="chain" id="PRO_1000069390" description="Lipoate-protein ligase A">
    <location>
        <begin position="1"/>
        <end position="338"/>
    </location>
</feature>
<feature type="domain" description="BPL/LPL catalytic" evidence="2">
    <location>
        <begin position="29"/>
        <end position="216"/>
    </location>
</feature>
<feature type="binding site" evidence="1">
    <location>
        <position position="71"/>
    </location>
    <ligand>
        <name>ATP</name>
        <dbReference type="ChEBI" id="CHEBI:30616"/>
    </ligand>
</feature>
<feature type="binding site" evidence="1">
    <location>
        <begin position="76"/>
        <end position="79"/>
    </location>
    <ligand>
        <name>ATP</name>
        <dbReference type="ChEBI" id="CHEBI:30616"/>
    </ligand>
</feature>
<feature type="binding site" evidence="1">
    <location>
        <position position="134"/>
    </location>
    <ligand>
        <name>(R)-lipoate</name>
        <dbReference type="ChEBI" id="CHEBI:83088"/>
    </ligand>
</feature>
<feature type="binding site" evidence="1">
    <location>
        <position position="134"/>
    </location>
    <ligand>
        <name>ATP</name>
        <dbReference type="ChEBI" id="CHEBI:30616"/>
    </ligand>
</feature>
<dbReference type="EC" id="6.3.1.20" evidence="1"/>
<dbReference type="EMBL" id="CP000038">
    <property type="protein sequence ID" value="AAZ91004.1"/>
    <property type="molecule type" value="Genomic_DNA"/>
</dbReference>
<dbReference type="RefSeq" id="WP_000105889.1">
    <property type="nucleotide sequence ID" value="NC_007384.1"/>
</dbReference>
<dbReference type="SMR" id="Q3YU08"/>
<dbReference type="GeneID" id="93777459"/>
<dbReference type="KEGG" id="ssn:SSON_4536"/>
<dbReference type="HOGENOM" id="CLU_022986_0_1_6"/>
<dbReference type="UniPathway" id="UPA00537">
    <property type="reaction ID" value="UER00594"/>
</dbReference>
<dbReference type="UniPathway" id="UPA00537">
    <property type="reaction ID" value="UER00595"/>
</dbReference>
<dbReference type="Proteomes" id="UP000002529">
    <property type="component" value="Chromosome"/>
</dbReference>
<dbReference type="GO" id="GO:0005829">
    <property type="term" value="C:cytosol"/>
    <property type="evidence" value="ECO:0007669"/>
    <property type="project" value="TreeGrafter"/>
</dbReference>
<dbReference type="GO" id="GO:0005524">
    <property type="term" value="F:ATP binding"/>
    <property type="evidence" value="ECO:0007669"/>
    <property type="project" value="UniProtKB-KW"/>
</dbReference>
<dbReference type="GO" id="GO:0016979">
    <property type="term" value="F:lipoate-protein ligase activity"/>
    <property type="evidence" value="ECO:0007669"/>
    <property type="project" value="UniProtKB-UniRule"/>
</dbReference>
<dbReference type="GO" id="GO:0017118">
    <property type="term" value="F:lipoyltransferase activity"/>
    <property type="evidence" value="ECO:0007669"/>
    <property type="project" value="TreeGrafter"/>
</dbReference>
<dbReference type="GO" id="GO:0036211">
    <property type="term" value="P:protein modification process"/>
    <property type="evidence" value="ECO:0007669"/>
    <property type="project" value="InterPro"/>
</dbReference>
<dbReference type="CDD" id="cd16435">
    <property type="entry name" value="BPL_LplA_LipB"/>
    <property type="match status" value="1"/>
</dbReference>
<dbReference type="FunFam" id="3.30.390.50:FF:000002">
    <property type="entry name" value="Lipoate-protein ligase A"/>
    <property type="match status" value="1"/>
</dbReference>
<dbReference type="FunFam" id="3.30.930.10:FF:000024">
    <property type="entry name" value="Lipoate-protein ligase A"/>
    <property type="match status" value="1"/>
</dbReference>
<dbReference type="Gene3D" id="3.30.930.10">
    <property type="entry name" value="Bira Bifunctional Protein, Domain 2"/>
    <property type="match status" value="1"/>
</dbReference>
<dbReference type="Gene3D" id="3.30.390.50">
    <property type="entry name" value="CO dehydrogenase flavoprotein, C-terminal domain"/>
    <property type="match status" value="1"/>
</dbReference>
<dbReference type="HAMAP" id="MF_01602">
    <property type="entry name" value="LplA"/>
    <property type="match status" value="1"/>
</dbReference>
<dbReference type="InterPro" id="IPR045864">
    <property type="entry name" value="aa-tRNA-synth_II/BPL/LPL"/>
</dbReference>
<dbReference type="InterPro" id="IPR004143">
    <property type="entry name" value="BPL_LPL_catalytic"/>
</dbReference>
<dbReference type="InterPro" id="IPR023741">
    <property type="entry name" value="Lipoate_ligase_A"/>
</dbReference>
<dbReference type="InterPro" id="IPR019491">
    <property type="entry name" value="Lipoate_protein_ligase_C"/>
</dbReference>
<dbReference type="InterPro" id="IPR004562">
    <property type="entry name" value="LipoylTrfase_LipoateP_Ligase"/>
</dbReference>
<dbReference type="NCBIfam" id="TIGR00545">
    <property type="entry name" value="lipoyltrans"/>
    <property type="match status" value="1"/>
</dbReference>
<dbReference type="PANTHER" id="PTHR12561">
    <property type="entry name" value="LIPOATE-PROTEIN LIGASE"/>
    <property type="match status" value="1"/>
</dbReference>
<dbReference type="PANTHER" id="PTHR12561:SF3">
    <property type="entry name" value="LIPOYLTRANSFERASE 1, MITOCHONDRIAL"/>
    <property type="match status" value="1"/>
</dbReference>
<dbReference type="Pfam" id="PF10437">
    <property type="entry name" value="Lip_prot_lig_C"/>
    <property type="match status" value="1"/>
</dbReference>
<dbReference type="Pfam" id="PF21948">
    <property type="entry name" value="LplA-B_cat"/>
    <property type="match status" value="1"/>
</dbReference>
<dbReference type="SUPFAM" id="SSF55681">
    <property type="entry name" value="Class II aaRS and biotin synthetases"/>
    <property type="match status" value="1"/>
</dbReference>
<dbReference type="SUPFAM" id="SSF82649">
    <property type="entry name" value="SufE/NifU"/>
    <property type="match status" value="1"/>
</dbReference>
<dbReference type="PROSITE" id="PS51733">
    <property type="entry name" value="BPL_LPL_CATALYTIC"/>
    <property type="match status" value="1"/>
</dbReference>
<reference key="1">
    <citation type="journal article" date="2005" name="Nucleic Acids Res.">
        <title>Genome dynamics and diversity of Shigella species, the etiologic agents of bacillary dysentery.</title>
        <authorList>
            <person name="Yang F."/>
            <person name="Yang J."/>
            <person name="Zhang X."/>
            <person name="Chen L."/>
            <person name="Jiang Y."/>
            <person name="Yan Y."/>
            <person name="Tang X."/>
            <person name="Wang J."/>
            <person name="Xiong Z."/>
            <person name="Dong J."/>
            <person name="Xue Y."/>
            <person name="Zhu Y."/>
            <person name="Xu X."/>
            <person name="Sun L."/>
            <person name="Chen S."/>
            <person name="Nie H."/>
            <person name="Peng J."/>
            <person name="Xu J."/>
            <person name="Wang Y."/>
            <person name="Yuan Z."/>
            <person name="Wen Y."/>
            <person name="Yao Z."/>
            <person name="Shen Y."/>
            <person name="Qiang B."/>
            <person name="Hou Y."/>
            <person name="Yu J."/>
            <person name="Jin Q."/>
        </authorList>
    </citation>
    <scope>NUCLEOTIDE SEQUENCE [LARGE SCALE GENOMIC DNA]</scope>
    <source>
        <strain>Ss046</strain>
    </source>
</reference>
<comment type="function">
    <text evidence="1">Catalyzes both the ATP-dependent activation of exogenously supplied lipoate to lipoyl-AMP and the transfer of the activated lipoyl onto the lipoyl domains of lipoate-dependent enzymes.</text>
</comment>
<comment type="catalytic activity">
    <reaction evidence="1">
        <text>L-lysyl-[lipoyl-carrier protein] + (R)-lipoate + ATP = N(6)-[(R)-lipoyl]-L-lysyl-[lipoyl-carrier protein] + AMP + diphosphate + H(+)</text>
        <dbReference type="Rhea" id="RHEA:49288"/>
        <dbReference type="Rhea" id="RHEA-COMP:10500"/>
        <dbReference type="Rhea" id="RHEA-COMP:10502"/>
        <dbReference type="ChEBI" id="CHEBI:15378"/>
        <dbReference type="ChEBI" id="CHEBI:29969"/>
        <dbReference type="ChEBI" id="CHEBI:30616"/>
        <dbReference type="ChEBI" id="CHEBI:33019"/>
        <dbReference type="ChEBI" id="CHEBI:83088"/>
        <dbReference type="ChEBI" id="CHEBI:83099"/>
        <dbReference type="ChEBI" id="CHEBI:456215"/>
        <dbReference type="EC" id="6.3.1.20"/>
    </reaction>
</comment>
<comment type="pathway">
    <text evidence="1">Protein modification; protein lipoylation via exogenous pathway; protein N(6)-(lipoyl)lysine from lipoate: step 1/2.</text>
</comment>
<comment type="pathway">
    <text evidence="1">Protein modification; protein lipoylation via exogenous pathway; protein N(6)-(lipoyl)lysine from lipoate: step 2/2.</text>
</comment>
<comment type="subunit">
    <text evidence="1">Monomer.</text>
</comment>
<comment type="subcellular location">
    <subcellularLocation>
        <location evidence="1">Cytoplasm</location>
    </subcellularLocation>
</comment>
<comment type="miscellaneous">
    <text evidence="1">In the transfer reaction, the free carboxyl group of lipoic acid is attached via an amide linkage to the epsilon-amino group of a specific lysine residue of lipoyl domains of lipoate-dependent enzymes.</text>
</comment>
<comment type="similarity">
    <text evidence="1">Belongs to the LplA family.</text>
</comment>
<proteinExistence type="inferred from homology"/>
<sequence>MSTLRLLISDSYDPWFNLAVEECIFRQMPATQRVLFLWRNADTVVIGRAQNPWKECNTRRMEEDNVRLARRSSGGGAVFHDLGNTCFTFMAGKPEYDKTISTSIVLNALNALGVSAEASGRNDLVVKTVEGDRKVSGSAYRETKDRGFHHGTLLLNADLSRLANYLNPDKKKLAAKGITSVRSRVTNLTELLPGITHEQVCEAITKAFFAHYGERVEAEIISPDKTPDLPNFAETFARQSSWEWNFGQAPAFSHLLDERFSWGGVELHFDVEKGHITRAQVFTDSLNPAPLEALAGRLQGCLYRADMLQQECEALLVDFPDQEKELRELSTWIAGAVR</sequence>
<organism>
    <name type="scientific">Shigella sonnei (strain Ss046)</name>
    <dbReference type="NCBI Taxonomy" id="300269"/>
    <lineage>
        <taxon>Bacteria</taxon>
        <taxon>Pseudomonadati</taxon>
        <taxon>Pseudomonadota</taxon>
        <taxon>Gammaproteobacteria</taxon>
        <taxon>Enterobacterales</taxon>
        <taxon>Enterobacteriaceae</taxon>
        <taxon>Shigella</taxon>
    </lineage>
</organism>
<keyword id="KW-0067">ATP-binding</keyword>
<keyword id="KW-0963">Cytoplasm</keyword>
<keyword id="KW-0436">Ligase</keyword>
<keyword id="KW-0547">Nucleotide-binding</keyword>
<keyword id="KW-1185">Reference proteome</keyword>
<accession>Q3YU08</accession>
<name>LPLA_SHISS</name>
<protein>
    <recommendedName>
        <fullName evidence="1">Lipoate-protein ligase A</fullName>
        <ecNumber evidence="1">6.3.1.20</ecNumber>
    </recommendedName>
    <alternativeName>
        <fullName evidence="1">Lipoate--protein ligase</fullName>
    </alternativeName>
</protein>